<dbReference type="EC" id="3.4.21.92" evidence="1"/>
<dbReference type="EMBL" id="D17510">
    <property type="protein sequence ID" value="BAA04336.1"/>
    <property type="molecule type" value="Genomic_DNA"/>
</dbReference>
<dbReference type="PIR" id="T07458">
    <property type="entry name" value="T07458"/>
</dbReference>
<dbReference type="RefSeq" id="NP_042379.1">
    <property type="nucleotide sequence ID" value="NC_001631.1"/>
</dbReference>
<dbReference type="SMR" id="P41609"/>
<dbReference type="MEROPS" id="S14.002"/>
<dbReference type="GeneID" id="809090"/>
<dbReference type="BRENDA" id="3.4.21.92">
    <property type="organism ID" value="4862"/>
</dbReference>
<dbReference type="GO" id="GO:0009570">
    <property type="term" value="C:chloroplast stroma"/>
    <property type="evidence" value="ECO:0007669"/>
    <property type="project" value="UniProtKB-SubCell"/>
</dbReference>
<dbReference type="GO" id="GO:0009368">
    <property type="term" value="C:endopeptidase Clp complex"/>
    <property type="evidence" value="ECO:0007669"/>
    <property type="project" value="TreeGrafter"/>
</dbReference>
<dbReference type="GO" id="GO:0004176">
    <property type="term" value="F:ATP-dependent peptidase activity"/>
    <property type="evidence" value="ECO:0007669"/>
    <property type="project" value="InterPro"/>
</dbReference>
<dbReference type="GO" id="GO:0051117">
    <property type="term" value="F:ATPase binding"/>
    <property type="evidence" value="ECO:0007669"/>
    <property type="project" value="TreeGrafter"/>
</dbReference>
<dbReference type="GO" id="GO:0004252">
    <property type="term" value="F:serine-type endopeptidase activity"/>
    <property type="evidence" value="ECO:0007669"/>
    <property type="project" value="UniProtKB-UniRule"/>
</dbReference>
<dbReference type="GO" id="GO:0006515">
    <property type="term" value="P:protein quality control for misfolded or incompletely synthesized proteins"/>
    <property type="evidence" value="ECO:0007669"/>
    <property type="project" value="TreeGrafter"/>
</dbReference>
<dbReference type="CDD" id="cd07017">
    <property type="entry name" value="S14_ClpP_2"/>
    <property type="match status" value="1"/>
</dbReference>
<dbReference type="FunFam" id="3.90.226.10:FF:000006">
    <property type="entry name" value="ATP-dependent Clp protease proteolytic subunit"/>
    <property type="match status" value="1"/>
</dbReference>
<dbReference type="Gene3D" id="3.90.226.10">
    <property type="entry name" value="2-enoyl-CoA Hydratase, Chain A, domain 1"/>
    <property type="match status" value="1"/>
</dbReference>
<dbReference type="HAMAP" id="MF_00444">
    <property type="entry name" value="ClpP"/>
    <property type="match status" value="1"/>
</dbReference>
<dbReference type="InterPro" id="IPR001907">
    <property type="entry name" value="ClpP"/>
</dbReference>
<dbReference type="InterPro" id="IPR029045">
    <property type="entry name" value="ClpP/crotonase-like_dom_sf"/>
</dbReference>
<dbReference type="InterPro" id="IPR023562">
    <property type="entry name" value="ClpP/TepA"/>
</dbReference>
<dbReference type="InterPro" id="IPR033135">
    <property type="entry name" value="ClpP_His_AS"/>
</dbReference>
<dbReference type="InterPro" id="IPR018215">
    <property type="entry name" value="ClpP_Ser_AS"/>
</dbReference>
<dbReference type="PANTHER" id="PTHR10381">
    <property type="entry name" value="ATP-DEPENDENT CLP PROTEASE PROTEOLYTIC SUBUNIT"/>
    <property type="match status" value="1"/>
</dbReference>
<dbReference type="PANTHER" id="PTHR10381:SF15">
    <property type="entry name" value="CHLOROPLASTIC ATP-DEPENDENT CLP PROTEASE PROTEOLYTIC SUBUNIT 1"/>
    <property type="match status" value="1"/>
</dbReference>
<dbReference type="Pfam" id="PF00574">
    <property type="entry name" value="CLP_protease"/>
    <property type="match status" value="1"/>
</dbReference>
<dbReference type="PRINTS" id="PR00127">
    <property type="entry name" value="CLPPROTEASEP"/>
</dbReference>
<dbReference type="SUPFAM" id="SSF52096">
    <property type="entry name" value="ClpP/crotonase"/>
    <property type="match status" value="1"/>
</dbReference>
<dbReference type="PROSITE" id="PS00382">
    <property type="entry name" value="CLP_PROTEASE_HIS"/>
    <property type="match status" value="1"/>
</dbReference>
<dbReference type="PROSITE" id="PS00381">
    <property type="entry name" value="CLP_PROTEASE_SER"/>
    <property type="match status" value="1"/>
</dbReference>
<comment type="function">
    <text evidence="1">Cleaves peptides in various proteins in a process that requires ATP hydrolysis. Has a chymotrypsin-like activity. Plays a major role in the degradation of misfolded proteins.</text>
</comment>
<comment type="catalytic activity">
    <reaction evidence="1">
        <text>Hydrolysis of proteins to small peptides in the presence of ATP and magnesium. alpha-casein is the usual test substrate. In the absence of ATP, only oligopeptides shorter than five residues are hydrolyzed (such as succinyl-Leu-Tyr-|-NHMec, and Leu-Tyr-Leu-|-Tyr-Trp, in which cleavage of the -Tyr-|-Leu- and -Tyr-|-Trp bonds also occurs).</text>
        <dbReference type="EC" id="3.4.21.92"/>
    </reaction>
</comment>
<comment type="subunit">
    <text>Component of the chloroplastic Clp protease core complex.</text>
</comment>
<comment type="subcellular location">
    <subcellularLocation>
        <location evidence="1">Plastid</location>
        <location evidence="1">Chloroplast stroma</location>
    </subcellularLocation>
</comment>
<comment type="similarity">
    <text evidence="1">Belongs to the peptidase S14 family.</text>
</comment>
<evidence type="ECO:0000255" key="1">
    <source>
        <dbReference type="HAMAP-Rule" id="MF_00444"/>
    </source>
</evidence>
<feature type="chain" id="PRO_0000179755" description="ATP-dependent Clp protease proteolytic subunit">
    <location>
        <begin position="1"/>
        <end position="196"/>
    </location>
</feature>
<feature type="active site" description="Nucleophile" evidence="1">
    <location>
        <position position="101"/>
    </location>
</feature>
<feature type="active site" evidence="1">
    <location>
        <position position="126"/>
    </location>
</feature>
<name>CLPP_PINTH</name>
<geneLocation type="chloroplast"/>
<protein>
    <recommendedName>
        <fullName evidence="1">ATP-dependent Clp protease proteolytic subunit</fullName>
        <ecNumber evidence="1">3.4.21.92</ecNumber>
    </recommendedName>
    <alternativeName>
        <fullName evidence="1">Endopeptidase Clp</fullName>
    </alternativeName>
</protein>
<gene>
    <name evidence="1" type="primary">clpP</name>
</gene>
<proteinExistence type="inferred from homology"/>
<organism>
    <name type="scientific">Pinus thunbergii</name>
    <name type="common">Japanese black pine</name>
    <name type="synonym">Pinus thunbergiana</name>
    <dbReference type="NCBI Taxonomy" id="3350"/>
    <lineage>
        <taxon>Eukaryota</taxon>
        <taxon>Viridiplantae</taxon>
        <taxon>Streptophyta</taxon>
        <taxon>Embryophyta</taxon>
        <taxon>Tracheophyta</taxon>
        <taxon>Spermatophyta</taxon>
        <taxon>Pinopsida</taxon>
        <taxon>Pinidae</taxon>
        <taxon>Conifers I</taxon>
        <taxon>Pinales</taxon>
        <taxon>Pinaceae</taxon>
        <taxon>Pinus</taxon>
        <taxon>Pinus subgen. Pinus</taxon>
    </lineage>
</organism>
<accession>P41609</accession>
<reference key="1">
    <citation type="journal article" date="1994" name="Proc. Natl. Acad. Sci. U.S.A.">
        <title>Loss of all ndh genes as determined by sequencing the entire chloroplast genome of the black pine Pinus thunbergii.</title>
        <authorList>
            <person name="Wakasugi T."/>
            <person name="Tsudzuki J."/>
            <person name="Ito S."/>
            <person name="Nakashima K."/>
            <person name="Tsudzuki T."/>
            <person name="Sugiura M."/>
        </authorList>
    </citation>
    <scope>NUCLEOTIDE SEQUENCE [LARGE SCALE GENOMIC DNA]</scope>
</reference>
<keyword id="KW-0150">Chloroplast</keyword>
<keyword id="KW-0378">Hydrolase</keyword>
<keyword id="KW-0934">Plastid</keyword>
<keyword id="KW-0645">Protease</keyword>
<keyword id="KW-0720">Serine protease</keyword>
<sequence length="196" mass="21771">MPVGVPKVPFRAPGDEDATWVDLYNRLYRERLLFLAQDINHEIANQLMGLMVYLSAEDSNKDIFSFINCPGGSVIPGVGLFDMMQAIVPDVHTICMGVAASMGSFILIGGEMPKRIALPHARIMIHQPASSYYDGSAADFHNESKHVTMLRDYITRCYIERTDQPGEVIQRDLNRDVFMSATEAQAYGIVDVVAEG</sequence>